<protein>
    <recommendedName>
        <fullName>Myb-related protein MYBAS1</fullName>
    </recommendedName>
</protein>
<sequence length="237" mass="27226">MVTVREEMRKGPWTEQEDLQLVCTVRLFGDRRWDFVAKVSGLNRTGKSCRLRWVNYLHPGLKHGRMSPKEEHLIIELHARWGNRWSRIARRLPGRTDNEIKNYWRTHMRKKAQERRGDMSPSSSSSSLVYQSCLLDTVPIISMDGGDIHDDRSCMARVLKSTQSVMDGYTMDQIWKEIEAPGAPSLLGIDEGKDKACSNLPCPLLTSTMSDYSCPEVFWKIDNEETRMLATQSGYGK</sequence>
<organism>
    <name type="scientific">Oryza sativa subsp. japonica</name>
    <name type="common">Rice</name>
    <dbReference type="NCBI Taxonomy" id="39947"/>
    <lineage>
        <taxon>Eukaryota</taxon>
        <taxon>Viridiplantae</taxon>
        <taxon>Streptophyta</taxon>
        <taxon>Embryophyta</taxon>
        <taxon>Tracheophyta</taxon>
        <taxon>Spermatophyta</taxon>
        <taxon>Magnoliopsida</taxon>
        <taxon>Liliopsida</taxon>
        <taxon>Poales</taxon>
        <taxon>Poaceae</taxon>
        <taxon>BOP clade</taxon>
        <taxon>Oryzoideae</taxon>
        <taxon>Oryzeae</taxon>
        <taxon>Oryzinae</taxon>
        <taxon>Oryza</taxon>
        <taxon>Oryza sativa</taxon>
    </lineage>
</organism>
<reference key="1">
    <citation type="journal article" date="2006" name="J. Exp. Bot.">
        <title>A subgroup of MYB transcription factor genes undergoes highly conserved alternative splicing in Arabidopsis and rice.</title>
        <authorList>
            <person name="Li J."/>
            <person name="Li X."/>
            <person name="Guo L."/>
            <person name="Lu F."/>
            <person name="Feng X."/>
            <person name="He K."/>
            <person name="Wei L."/>
            <person name="Chen Z."/>
            <person name="Qu L.-J."/>
            <person name="Gu H."/>
        </authorList>
    </citation>
    <scope>NUCLEOTIDE SEQUENCE [MRNA] (ISOFORMS MYBAS1-1 AND MYBAS1-3)</scope>
    <scope>ALTERNATIVE SPLICING</scope>
    <source>
        <strain>cv. Nipponbare</strain>
    </source>
</reference>
<reference key="2">
    <citation type="journal article" date="2005" name="BMC Biol.">
        <title>The sequence of rice chromosomes 11 and 12, rich in disease resistance genes and recent gene duplications.</title>
        <authorList>
            <consortium name="The rice chromosomes 11 and 12 sequencing consortia"/>
        </authorList>
    </citation>
    <scope>NUCLEOTIDE SEQUENCE [LARGE SCALE GENOMIC DNA]</scope>
    <source>
        <strain>cv. Nipponbare</strain>
    </source>
</reference>
<reference key="3">
    <citation type="journal article" date="2005" name="Nature">
        <title>The map-based sequence of the rice genome.</title>
        <authorList>
            <consortium name="International rice genome sequencing project (IRGSP)"/>
        </authorList>
    </citation>
    <scope>NUCLEOTIDE SEQUENCE [LARGE SCALE GENOMIC DNA]</scope>
    <source>
        <strain>cv. Nipponbare</strain>
    </source>
</reference>
<reference key="4">
    <citation type="journal article" date="2008" name="Nucleic Acids Res.">
        <title>The rice annotation project database (RAP-DB): 2008 update.</title>
        <authorList>
            <consortium name="The rice annotation project (RAP)"/>
        </authorList>
    </citation>
    <scope>GENOME REANNOTATION</scope>
    <source>
        <strain>cv. Nipponbare</strain>
    </source>
</reference>
<reference key="5">
    <citation type="journal article" date="2013" name="Rice">
        <title>Improvement of the Oryza sativa Nipponbare reference genome using next generation sequence and optical map data.</title>
        <authorList>
            <person name="Kawahara Y."/>
            <person name="de la Bastide M."/>
            <person name="Hamilton J.P."/>
            <person name="Kanamori H."/>
            <person name="McCombie W.R."/>
            <person name="Ouyang S."/>
            <person name="Schwartz D.C."/>
            <person name="Tanaka T."/>
            <person name="Wu J."/>
            <person name="Zhou S."/>
            <person name="Childs K.L."/>
            <person name="Davidson R.M."/>
            <person name="Lin H."/>
            <person name="Quesada-Ocampo L."/>
            <person name="Vaillancourt B."/>
            <person name="Sakai H."/>
            <person name="Lee S.S."/>
            <person name="Kim J."/>
            <person name="Numa H."/>
            <person name="Itoh T."/>
            <person name="Buell C.R."/>
            <person name="Matsumoto T."/>
        </authorList>
    </citation>
    <scope>GENOME REANNOTATION</scope>
    <source>
        <strain>cv. Nipponbare</strain>
    </source>
</reference>
<reference key="6">
    <citation type="journal article" date="2005" name="PLoS Biol.">
        <title>The genomes of Oryza sativa: a history of duplications.</title>
        <authorList>
            <person name="Yu J."/>
            <person name="Wang J."/>
            <person name="Lin W."/>
            <person name="Li S."/>
            <person name="Li H."/>
            <person name="Zhou J."/>
            <person name="Ni P."/>
            <person name="Dong W."/>
            <person name="Hu S."/>
            <person name="Zeng C."/>
            <person name="Zhang J."/>
            <person name="Zhang Y."/>
            <person name="Li R."/>
            <person name="Xu Z."/>
            <person name="Li S."/>
            <person name="Li X."/>
            <person name="Zheng H."/>
            <person name="Cong L."/>
            <person name="Lin L."/>
            <person name="Yin J."/>
            <person name="Geng J."/>
            <person name="Li G."/>
            <person name="Shi J."/>
            <person name="Liu J."/>
            <person name="Lv H."/>
            <person name="Li J."/>
            <person name="Wang J."/>
            <person name="Deng Y."/>
            <person name="Ran L."/>
            <person name="Shi X."/>
            <person name="Wang X."/>
            <person name="Wu Q."/>
            <person name="Li C."/>
            <person name="Ren X."/>
            <person name="Wang J."/>
            <person name="Wang X."/>
            <person name="Li D."/>
            <person name="Liu D."/>
            <person name="Zhang X."/>
            <person name="Ji Z."/>
            <person name="Zhao W."/>
            <person name="Sun Y."/>
            <person name="Zhang Z."/>
            <person name="Bao J."/>
            <person name="Han Y."/>
            <person name="Dong L."/>
            <person name="Ji J."/>
            <person name="Chen P."/>
            <person name="Wu S."/>
            <person name="Liu J."/>
            <person name="Xiao Y."/>
            <person name="Bu D."/>
            <person name="Tan J."/>
            <person name="Yang L."/>
            <person name="Ye C."/>
            <person name="Zhang J."/>
            <person name="Xu J."/>
            <person name="Zhou Y."/>
            <person name="Yu Y."/>
            <person name="Zhang B."/>
            <person name="Zhuang S."/>
            <person name="Wei H."/>
            <person name="Liu B."/>
            <person name="Lei M."/>
            <person name="Yu H."/>
            <person name="Li Y."/>
            <person name="Xu H."/>
            <person name="Wei S."/>
            <person name="He X."/>
            <person name="Fang L."/>
            <person name="Zhang Z."/>
            <person name="Zhang Y."/>
            <person name="Huang X."/>
            <person name="Su Z."/>
            <person name="Tong W."/>
            <person name="Li J."/>
            <person name="Tong Z."/>
            <person name="Li S."/>
            <person name="Ye J."/>
            <person name="Wang L."/>
            <person name="Fang L."/>
            <person name="Lei T."/>
            <person name="Chen C.-S."/>
            <person name="Chen H.-C."/>
            <person name="Xu Z."/>
            <person name="Li H."/>
            <person name="Huang H."/>
            <person name="Zhang F."/>
            <person name="Xu H."/>
            <person name="Li N."/>
            <person name="Zhao C."/>
            <person name="Li S."/>
            <person name="Dong L."/>
            <person name="Huang Y."/>
            <person name="Li L."/>
            <person name="Xi Y."/>
            <person name="Qi Q."/>
            <person name="Li W."/>
            <person name="Zhang B."/>
            <person name="Hu W."/>
            <person name="Zhang Y."/>
            <person name="Tian X."/>
            <person name="Jiao Y."/>
            <person name="Liang X."/>
            <person name="Jin J."/>
            <person name="Gao L."/>
            <person name="Zheng W."/>
            <person name="Hao B."/>
            <person name="Liu S.-M."/>
            <person name="Wang W."/>
            <person name="Yuan L."/>
            <person name="Cao M."/>
            <person name="McDermott J."/>
            <person name="Samudrala R."/>
            <person name="Wang J."/>
            <person name="Wong G.K.-S."/>
            <person name="Yang H."/>
        </authorList>
    </citation>
    <scope>NUCLEOTIDE SEQUENCE [LARGE SCALE GENOMIC DNA]</scope>
    <source>
        <strain>cv. Nipponbare</strain>
    </source>
</reference>
<reference key="7">
    <citation type="journal article" date="2003" name="Science">
        <title>Collection, mapping, and annotation of over 28,000 cDNA clones from japonica rice.</title>
        <authorList>
            <consortium name="The rice full-length cDNA consortium"/>
        </authorList>
    </citation>
    <scope>NUCLEOTIDE SEQUENCE [LARGE SCALE MRNA] (ISOFORMS MYBAS1-3)</scope>
    <source>
        <strain>cv. Nipponbare</strain>
    </source>
</reference>
<dbReference type="EMBL" id="DQ075258">
    <property type="protein sequence ID" value="AAY97899.1"/>
    <property type="molecule type" value="mRNA"/>
</dbReference>
<dbReference type="EMBL" id="DQ075259">
    <property type="protein sequence ID" value="AAY97900.1"/>
    <property type="molecule type" value="mRNA"/>
</dbReference>
<dbReference type="EMBL" id="DQ075260">
    <property type="protein sequence ID" value="AAY97901.1"/>
    <property type="molecule type" value="mRNA"/>
</dbReference>
<dbReference type="EMBL" id="AC134045">
    <property type="protein sequence ID" value="AAX95362.1"/>
    <property type="molecule type" value="Genomic_DNA"/>
</dbReference>
<dbReference type="EMBL" id="DP000010">
    <property type="protein sequence ID" value="ABA95393.2"/>
    <property type="molecule type" value="Genomic_DNA"/>
</dbReference>
<dbReference type="EMBL" id="DP000010">
    <property type="protein sequence ID" value="ABA95395.2"/>
    <property type="molecule type" value="Genomic_DNA"/>
</dbReference>
<dbReference type="EMBL" id="AP008217">
    <property type="protein sequence ID" value="BAF28880.1"/>
    <property type="molecule type" value="Genomic_DNA"/>
</dbReference>
<dbReference type="EMBL" id="AP014967">
    <property type="protein sequence ID" value="BAT15361.1"/>
    <property type="molecule type" value="Genomic_DNA"/>
</dbReference>
<dbReference type="EMBL" id="CM000148">
    <property type="protein sequence ID" value="EAZ19289.1"/>
    <property type="molecule type" value="Genomic_DNA"/>
</dbReference>
<dbReference type="EMBL" id="AK111626">
    <property type="protein sequence ID" value="BAG99340.1"/>
    <property type="molecule type" value="mRNA"/>
</dbReference>
<dbReference type="RefSeq" id="XP_015617959.1">
    <property type="nucleotide sequence ID" value="XM_015762473.1"/>
</dbReference>
<dbReference type="SMR" id="Q53NK6"/>
<dbReference type="FunCoup" id="Q53NK6">
    <property type="interactions" value="29"/>
</dbReference>
<dbReference type="STRING" id="39947.Q53NK6"/>
<dbReference type="PaxDb" id="39947-Q53NK6"/>
<dbReference type="EnsemblPlants" id="Os11t0700500-01">
    <molecule id="Q53NK6-1"/>
    <property type="protein sequence ID" value="Os11t0700500-01"/>
    <property type="gene ID" value="Os11g0700500"/>
</dbReference>
<dbReference type="Gramene" id="Os11t0700500-01">
    <molecule id="Q53NK6-1"/>
    <property type="protein sequence ID" value="Os11t0700500-01"/>
    <property type="gene ID" value="Os11g0700500"/>
</dbReference>
<dbReference type="KEGG" id="dosa:Os11g0700500"/>
<dbReference type="eggNOG" id="KOG0048">
    <property type="taxonomic scope" value="Eukaryota"/>
</dbReference>
<dbReference type="HOGENOM" id="CLU_028567_25_0_1"/>
<dbReference type="InParanoid" id="Q53NK6"/>
<dbReference type="OMA" id="TMDQIWR"/>
<dbReference type="OrthoDB" id="2143914at2759"/>
<dbReference type="Proteomes" id="UP000000763">
    <property type="component" value="Chromosome 11"/>
</dbReference>
<dbReference type="Proteomes" id="UP000007752">
    <property type="component" value="Chromosome 11"/>
</dbReference>
<dbReference type="Proteomes" id="UP000059680">
    <property type="component" value="Chromosome 11"/>
</dbReference>
<dbReference type="GO" id="GO:0005634">
    <property type="term" value="C:nucleus"/>
    <property type="evidence" value="ECO:0000318"/>
    <property type="project" value="GO_Central"/>
</dbReference>
<dbReference type="GO" id="GO:0003700">
    <property type="term" value="F:DNA-binding transcription factor activity"/>
    <property type="evidence" value="ECO:0007669"/>
    <property type="project" value="InterPro"/>
</dbReference>
<dbReference type="GO" id="GO:0043565">
    <property type="term" value="F:sequence-specific DNA binding"/>
    <property type="evidence" value="ECO:0000318"/>
    <property type="project" value="GO_Central"/>
</dbReference>
<dbReference type="GO" id="GO:0006355">
    <property type="term" value="P:regulation of DNA-templated transcription"/>
    <property type="evidence" value="ECO:0000318"/>
    <property type="project" value="GO_Central"/>
</dbReference>
<dbReference type="CDD" id="cd00167">
    <property type="entry name" value="SANT"/>
    <property type="match status" value="2"/>
</dbReference>
<dbReference type="FunFam" id="1.10.10.60:FF:000259">
    <property type="entry name" value="MYB transcription factor"/>
    <property type="match status" value="1"/>
</dbReference>
<dbReference type="FunFam" id="1.10.10.60:FF:000011">
    <property type="entry name" value="Myb transcription factor"/>
    <property type="match status" value="1"/>
</dbReference>
<dbReference type="Gene3D" id="1.10.10.60">
    <property type="entry name" value="Homeodomain-like"/>
    <property type="match status" value="2"/>
</dbReference>
<dbReference type="InterPro" id="IPR044676">
    <property type="entry name" value="EOBI/EOBII-like_plant"/>
</dbReference>
<dbReference type="InterPro" id="IPR009057">
    <property type="entry name" value="Homeodomain-like_sf"/>
</dbReference>
<dbReference type="InterPro" id="IPR017930">
    <property type="entry name" value="Myb_dom"/>
</dbReference>
<dbReference type="InterPro" id="IPR001005">
    <property type="entry name" value="SANT/Myb"/>
</dbReference>
<dbReference type="PANTHER" id="PTHR45675">
    <property type="entry name" value="MYB TRANSCRIPTION FACTOR-RELATED-RELATED"/>
    <property type="match status" value="1"/>
</dbReference>
<dbReference type="PANTHER" id="PTHR45675:SF2">
    <property type="entry name" value="MYB-RELATED PROTEIN MYBAS1"/>
    <property type="match status" value="1"/>
</dbReference>
<dbReference type="Pfam" id="PF00249">
    <property type="entry name" value="Myb_DNA-binding"/>
    <property type="match status" value="2"/>
</dbReference>
<dbReference type="SMART" id="SM00717">
    <property type="entry name" value="SANT"/>
    <property type="match status" value="2"/>
</dbReference>
<dbReference type="SUPFAM" id="SSF46689">
    <property type="entry name" value="Homeodomain-like"/>
    <property type="match status" value="1"/>
</dbReference>
<dbReference type="PROSITE" id="PS51294">
    <property type="entry name" value="HTH_MYB"/>
    <property type="match status" value="2"/>
</dbReference>
<evidence type="ECO:0000255" key="1"/>
<evidence type="ECO:0000255" key="2">
    <source>
        <dbReference type="PROSITE-ProRule" id="PRU00625"/>
    </source>
</evidence>
<evidence type="ECO:0000303" key="3">
    <source>
    </source>
</evidence>
<evidence type="ECO:0000305" key="4"/>
<evidence type="ECO:0000312" key="5">
    <source>
        <dbReference type="EMBL" id="EAZ19289.1"/>
    </source>
</evidence>
<feature type="chain" id="PRO_0000234363" description="Myb-related protein MYBAS1">
    <location>
        <begin position="1"/>
        <end position="237"/>
    </location>
</feature>
<feature type="domain" description="HTH myb-type 1" evidence="2">
    <location>
        <begin position="5"/>
        <end position="57"/>
    </location>
</feature>
<feature type="domain" description="HTH myb-type 2" evidence="2">
    <location>
        <begin position="58"/>
        <end position="112"/>
    </location>
</feature>
<feature type="DNA-binding region" description="H-T-H motif" evidence="2">
    <location>
        <begin position="33"/>
        <end position="57"/>
    </location>
</feature>
<feature type="DNA-binding region" description="H-T-H motif" evidence="2">
    <location>
        <begin position="85"/>
        <end position="108"/>
    </location>
</feature>
<feature type="short sequence motif" description="Bipartite nuclear localization signal 1" evidence="1">
    <location>
        <begin position="62"/>
        <end position="65"/>
    </location>
</feature>
<feature type="short sequence motif" description="Bipartite nuclear localization signal 2" evidence="1">
    <location>
        <begin position="109"/>
        <end position="117"/>
    </location>
</feature>
<feature type="splice variant" id="VSP_018294" description="In isoform MYBAS1-1." evidence="3">
    <location>
        <begin position="1"/>
        <end position="65"/>
    </location>
</feature>
<name>MYBA1_ORYSJ</name>
<gene>
    <name type="primary">MYBAS1</name>
    <name type="ordered locus">Os11g0700500</name>
    <name type="ordered locus">LOC_Os11g47460</name>
    <name evidence="5" type="ORF">OsJ_34832</name>
</gene>
<comment type="function">
    <text evidence="4">Transcription factor.</text>
</comment>
<comment type="subcellular location">
    <subcellularLocation>
        <location evidence="2">Nucleus</location>
    </subcellularLocation>
</comment>
<comment type="alternative products">
    <event type="alternative splicing"/>
    <isoform>
        <id>Q53NK6-1</id>
        <name>MYBAS1-3</name>
        <sequence type="displayed"/>
    </isoform>
    <isoform>
        <id>Q53NK6-2</id>
        <name>MYBAS1-1</name>
        <name>MYBAS1-2</name>
        <sequence type="described" ref="VSP_018294"/>
    </isoform>
</comment>
<accession>Q53NK6</accession>
<accession>Q0IQY5</accession>
<accession>Q4JL80</accession>
<keyword id="KW-0025">Alternative splicing</keyword>
<keyword id="KW-0238">DNA-binding</keyword>
<keyword id="KW-0539">Nucleus</keyword>
<keyword id="KW-1185">Reference proteome</keyword>
<keyword id="KW-0677">Repeat</keyword>
<keyword id="KW-0804">Transcription</keyword>
<keyword id="KW-0805">Transcription regulation</keyword>
<proteinExistence type="evidence at transcript level"/>